<feature type="chain" id="PRO_0000002241" description="Arginine biosynthesis bifunctional protein ArgJ alpha chain" evidence="1">
    <location>
        <begin position="1"/>
        <end position="183"/>
    </location>
</feature>
<feature type="chain" id="PRO_0000002242" description="Arginine biosynthesis bifunctional protein ArgJ beta chain" evidence="1">
    <location>
        <begin position="184"/>
        <end position="397"/>
    </location>
</feature>
<feature type="active site" description="Nucleophile" evidence="1">
    <location>
        <position position="184"/>
    </location>
</feature>
<feature type="binding site" evidence="1">
    <location>
        <position position="147"/>
    </location>
    <ligand>
        <name>substrate</name>
    </ligand>
</feature>
<feature type="binding site" evidence="1">
    <location>
        <position position="173"/>
    </location>
    <ligand>
        <name>substrate</name>
    </ligand>
</feature>
<feature type="binding site" evidence="1">
    <location>
        <position position="184"/>
    </location>
    <ligand>
        <name>substrate</name>
    </ligand>
</feature>
<feature type="binding site" evidence="1">
    <location>
        <position position="270"/>
    </location>
    <ligand>
        <name>substrate</name>
    </ligand>
</feature>
<feature type="binding site" evidence="1">
    <location>
        <position position="392"/>
    </location>
    <ligand>
        <name>substrate</name>
    </ligand>
</feature>
<feature type="binding site" evidence="1">
    <location>
        <position position="397"/>
    </location>
    <ligand>
        <name>substrate</name>
    </ligand>
</feature>
<feature type="site" description="Involved in the stabilization of negative charge on the oxyanion by the formation of the oxyanion hole" evidence="1">
    <location>
        <position position="113"/>
    </location>
</feature>
<feature type="site" description="Involved in the stabilization of negative charge on the oxyanion by the formation of the oxyanion hole" evidence="1">
    <location>
        <position position="114"/>
    </location>
</feature>
<feature type="site" description="Cleavage; by autolysis" evidence="1">
    <location>
        <begin position="183"/>
        <end position="184"/>
    </location>
</feature>
<gene>
    <name evidence="1" type="primary">argJ</name>
    <name type="ordered locus">SE_1211</name>
</gene>
<reference key="1">
    <citation type="journal article" date="2003" name="Mol. Microbiol.">
        <title>Genome-based analysis of virulence genes in a non-biofilm-forming Staphylococcus epidermidis strain (ATCC 12228).</title>
        <authorList>
            <person name="Zhang Y.-Q."/>
            <person name="Ren S.-X."/>
            <person name="Li H.-L."/>
            <person name="Wang Y.-X."/>
            <person name="Fu G."/>
            <person name="Yang J."/>
            <person name="Qin Z.-Q."/>
            <person name="Miao Y.-G."/>
            <person name="Wang W.-Y."/>
            <person name="Chen R.-S."/>
            <person name="Shen Y."/>
            <person name="Chen Z."/>
            <person name="Yuan Z.-H."/>
            <person name="Zhao G.-P."/>
            <person name="Qu D."/>
            <person name="Danchin A."/>
            <person name="Wen Y.-M."/>
        </authorList>
    </citation>
    <scope>NUCLEOTIDE SEQUENCE [LARGE SCALE GENOMIC DNA]</scope>
    <source>
        <strain>ATCC 12228 / FDA PCI 1200</strain>
    </source>
</reference>
<proteinExistence type="inferred from homology"/>
<dbReference type="EC" id="2.3.1.35" evidence="1"/>
<dbReference type="EC" id="2.3.1.1" evidence="1"/>
<dbReference type="EMBL" id="AE015929">
    <property type="protein sequence ID" value="AAO04810.1"/>
    <property type="molecule type" value="Genomic_DNA"/>
</dbReference>
<dbReference type="RefSeq" id="NP_764766.1">
    <property type="nucleotide sequence ID" value="NC_004461.1"/>
</dbReference>
<dbReference type="RefSeq" id="WP_001831095.1">
    <property type="nucleotide sequence ID" value="NZ_WBME01000006.1"/>
</dbReference>
<dbReference type="SMR" id="Q8CSF9"/>
<dbReference type="MEROPS" id="T05.002"/>
<dbReference type="GeneID" id="50018671"/>
<dbReference type="KEGG" id="sep:SE_1211"/>
<dbReference type="PATRIC" id="fig|176280.10.peg.1181"/>
<dbReference type="eggNOG" id="COG1364">
    <property type="taxonomic scope" value="Bacteria"/>
</dbReference>
<dbReference type="HOGENOM" id="CLU_027172_1_0_9"/>
<dbReference type="OrthoDB" id="9804242at2"/>
<dbReference type="UniPathway" id="UPA00068">
    <property type="reaction ID" value="UER00106"/>
</dbReference>
<dbReference type="UniPathway" id="UPA00068">
    <property type="reaction ID" value="UER00111"/>
</dbReference>
<dbReference type="Proteomes" id="UP000001411">
    <property type="component" value="Chromosome"/>
</dbReference>
<dbReference type="GO" id="GO:0005737">
    <property type="term" value="C:cytoplasm"/>
    <property type="evidence" value="ECO:0007669"/>
    <property type="project" value="UniProtKB-SubCell"/>
</dbReference>
<dbReference type="GO" id="GO:0004358">
    <property type="term" value="F:glutamate N-acetyltransferase activity"/>
    <property type="evidence" value="ECO:0007669"/>
    <property type="project" value="UniProtKB-UniRule"/>
</dbReference>
<dbReference type="GO" id="GO:0004042">
    <property type="term" value="F:L-glutamate N-acetyltransferase activity"/>
    <property type="evidence" value="ECO:0007669"/>
    <property type="project" value="UniProtKB-UniRule"/>
</dbReference>
<dbReference type="GO" id="GO:0006526">
    <property type="term" value="P:L-arginine biosynthetic process"/>
    <property type="evidence" value="ECO:0007669"/>
    <property type="project" value="UniProtKB-UniRule"/>
</dbReference>
<dbReference type="GO" id="GO:0006592">
    <property type="term" value="P:ornithine biosynthetic process"/>
    <property type="evidence" value="ECO:0007669"/>
    <property type="project" value="TreeGrafter"/>
</dbReference>
<dbReference type="CDD" id="cd02152">
    <property type="entry name" value="OAT"/>
    <property type="match status" value="1"/>
</dbReference>
<dbReference type="FunFam" id="3.10.20.340:FF:000001">
    <property type="entry name" value="Arginine biosynthesis bifunctional protein ArgJ, chloroplastic"/>
    <property type="match status" value="1"/>
</dbReference>
<dbReference type="FunFam" id="3.60.70.12:FF:000001">
    <property type="entry name" value="Arginine biosynthesis bifunctional protein ArgJ, chloroplastic"/>
    <property type="match status" value="1"/>
</dbReference>
<dbReference type="FunFam" id="3.30.2330.10:FF:000001">
    <property type="entry name" value="Arginine biosynthesis bifunctional protein ArgJ, mitochondrial"/>
    <property type="match status" value="1"/>
</dbReference>
<dbReference type="Gene3D" id="3.30.2330.10">
    <property type="entry name" value="arginine biosynthesis bifunctional protein suprefamily"/>
    <property type="match status" value="1"/>
</dbReference>
<dbReference type="Gene3D" id="3.10.20.340">
    <property type="entry name" value="ArgJ beta chain, C-terminal domain"/>
    <property type="match status" value="1"/>
</dbReference>
<dbReference type="Gene3D" id="3.60.70.12">
    <property type="entry name" value="L-amino peptidase D-ALA esterase/amidase"/>
    <property type="match status" value="1"/>
</dbReference>
<dbReference type="HAMAP" id="MF_01106">
    <property type="entry name" value="ArgJ"/>
    <property type="match status" value="1"/>
</dbReference>
<dbReference type="InterPro" id="IPR002813">
    <property type="entry name" value="Arg_biosynth_ArgJ"/>
</dbReference>
<dbReference type="InterPro" id="IPR016117">
    <property type="entry name" value="ArgJ-like_dom_sf"/>
</dbReference>
<dbReference type="InterPro" id="IPR042195">
    <property type="entry name" value="ArgJ_beta_C"/>
</dbReference>
<dbReference type="NCBIfam" id="TIGR00120">
    <property type="entry name" value="ArgJ"/>
    <property type="match status" value="1"/>
</dbReference>
<dbReference type="NCBIfam" id="NF003802">
    <property type="entry name" value="PRK05388.1"/>
    <property type="match status" value="1"/>
</dbReference>
<dbReference type="PANTHER" id="PTHR23100">
    <property type="entry name" value="ARGININE BIOSYNTHESIS BIFUNCTIONAL PROTEIN ARGJ"/>
    <property type="match status" value="1"/>
</dbReference>
<dbReference type="PANTHER" id="PTHR23100:SF0">
    <property type="entry name" value="ARGININE BIOSYNTHESIS BIFUNCTIONAL PROTEIN ARGJ, MITOCHONDRIAL"/>
    <property type="match status" value="1"/>
</dbReference>
<dbReference type="Pfam" id="PF01960">
    <property type="entry name" value="ArgJ"/>
    <property type="match status" value="1"/>
</dbReference>
<dbReference type="SUPFAM" id="SSF56266">
    <property type="entry name" value="DmpA/ArgJ-like"/>
    <property type="match status" value="1"/>
</dbReference>
<protein>
    <recommendedName>
        <fullName evidence="1">Arginine biosynthesis bifunctional protein ArgJ</fullName>
    </recommendedName>
    <domain>
        <recommendedName>
            <fullName evidence="1">Glutamate N-acetyltransferase</fullName>
            <ecNumber evidence="1">2.3.1.35</ecNumber>
        </recommendedName>
        <alternativeName>
            <fullName evidence="1">Ornithine acetyltransferase</fullName>
            <shortName evidence="1">OATase</shortName>
        </alternativeName>
        <alternativeName>
            <fullName evidence="1">Ornithine transacetylase</fullName>
        </alternativeName>
    </domain>
    <domain>
        <recommendedName>
            <fullName evidence="1">Amino-acid acetyltransferase</fullName>
            <ecNumber evidence="1">2.3.1.1</ecNumber>
        </recommendedName>
        <alternativeName>
            <fullName evidence="1">N-acetylglutamate synthase</fullName>
            <shortName evidence="1">AGSase</shortName>
        </alternativeName>
    </domain>
    <component>
        <recommendedName>
            <fullName evidence="1">Arginine biosynthesis bifunctional protein ArgJ alpha chain</fullName>
        </recommendedName>
    </component>
    <component>
        <recommendedName>
            <fullName evidence="1">Arginine biosynthesis bifunctional protein ArgJ beta chain</fullName>
        </recommendedName>
    </component>
</protein>
<sequence length="397" mass="42790">MNIIKGNIASPLGFSADGLHAGFKKKKLDFGWIVSEVPANVAGVFTTNKVIAAPLKLTKNSIEKSGKMQAIVVNSGIANSCTGKQGEKDAFKMQQLAANKLQIQPEYVGVASTGVIGKVMPMSILKNGFSKLVKNGNADDFAKAILTTDTHTKTCVVNEEFGSDTVTMAGVAKGSGMIHPNLATMLAFITCDANISSQTLQQALKDVVEVTFNQITVDGDTSTNDMVLVMSNGCTNNNEIKKDSEDYYKFKQMLLYIMTDLAKSIARDGEGASKLIEVTVKGAKESSAARMIAKSVVGSSLVKTAIFGEDPNWGRIIAAAGYAKTYFDINQVDIFIGRIPVLIRSSPVKYDKEEIQEIMSAEEISIQLDLHQGNCEGQAWGCDLSYDYVKINALYTT</sequence>
<accession>Q8CSF9</accession>
<comment type="function">
    <text evidence="1">Catalyzes two activities which are involved in the cyclic version of arginine biosynthesis: the synthesis of N-acetylglutamate from glutamate and acetyl-CoA as the acetyl donor, and of ornithine by transacetylation between N(2)-acetylornithine and glutamate.</text>
</comment>
<comment type="catalytic activity">
    <reaction evidence="1">
        <text>N(2)-acetyl-L-ornithine + L-glutamate = N-acetyl-L-glutamate + L-ornithine</text>
        <dbReference type="Rhea" id="RHEA:15349"/>
        <dbReference type="ChEBI" id="CHEBI:29985"/>
        <dbReference type="ChEBI" id="CHEBI:44337"/>
        <dbReference type="ChEBI" id="CHEBI:46911"/>
        <dbReference type="ChEBI" id="CHEBI:57805"/>
        <dbReference type="EC" id="2.3.1.35"/>
    </reaction>
</comment>
<comment type="catalytic activity">
    <reaction evidence="1">
        <text>L-glutamate + acetyl-CoA = N-acetyl-L-glutamate + CoA + H(+)</text>
        <dbReference type="Rhea" id="RHEA:24292"/>
        <dbReference type="ChEBI" id="CHEBI:15378"/>
        <dbReference type="ChEBI" id="CHEBI:29985"/>
        <dbReference type="ChEBI" id="CHEBI:44337"/>
        <dbReference type="ChEBI" id="CHEBI:57287"/>
        <dbReference type="ChEBI" id="CHEBI:57288"/>
        <dbReference type="EC" id="2.3.1.1"/>
    </reaction>
</comment>
<comment type="pathway">
    <text evidence="1">Amino-acid biosynthesis; L-arginine biosynthesis; L-ornithine and N-acetyl-L-glutamate from L-glutamate and N(2)-acetyl-L-ornithine (cyclic): step 1/1.</text>
</comment>
<comment type="pathway">
    <text evidence="1">Amino-acid biosynthesis; L-arginine biosynthesis; N(2)-acetyl-L-ornithine from L-glutamate: step 1/4.</text>
</comment>
<comment type="subunit">
    <text evidence="1">Heterotetramer of two alpha and two beta chains.</text>
</comment>
<comment type="subcellular location">
    <subcellularLocation>
        <location evidence="1">Cytoplasm</location>
    </subcellularLocation>
</comment>
<comment type="similarity">
    <text evidence="1">Belongs to the ArgJ family.</text>
</comment>
<evidence type="ECO:0000255" key="1">
    <source>
        <dbReference type="HAMAP-Rule" id="MF_01106"/>
    </source>
</evidence>
<name>ARGJ_STAES</name>
<keyword id="KW-0012">Acyltransferase</keyword>
<keyword id="KW-0028">Amino-acid biosynthesis</keyword>
<keyword id="KW-0055">Arginine biosynthesis</keyword>
<keyword id="KW-0068">Autocatalytic cleavage</keyword>
<keyword id="KW-0963">Cytoplasm</keyword>
<keyword id="KW-0511">Multifunctional enzyme</keyword>
<keyword id="KW-0808">Transferase</keyword>
<organism>
    <name type="scientific">Staphylococcus epidermidis (strain ATCC 12228 / FDA PCI 1200)</name>
    <dbReference type="NCBI Taxonomy" id="176280"/>
    <lineage>
        <taxon>Bacteria</taxon>
        <taxon>Bacillati</taxon>
        <taxon>Bacillota</taxon>
        <taxon>Bacilli</taxon>
        <taxon>Bacillales</taxon>
        <taxon>Staphylococcaceae</taxon>
        <taxon>Staphylococcus</taxon>
    </lineage>
</organism>